<feature type="initiator methionine" description="Removed" evidence="1">
    <location>
        <position position="1"/>
    </location>
</feature>
<feature type="chain" id="PRO_0000389395" description="Small ribosomal subunit protein eS1">
    <location>
        <begin position="2"/>
        <end position="256"/>
    </location>
</feature>
<feature type="region of interest" description="Disordered" evidence="2">
    <location>
        <begin position="1"/>
        <end position="20"/>
    </location>
</feature>
<feature type="compositionally biased region" description="Basic residues" evidence="2">
    <location>
        <begin position="1"/>
        <end position="18"/>
    </location>
</feature>
<feature type="modified residue" description="N-acetylalanine; partial" evidence="1">
    <location>
        <position position="2"/>
    </location>
</feature>
<dbReference type="EMBL" id="DS995901">
    <property type="protein sequence ID" value="EEA24657.1"/>
    <property type="molecule type" value="Genomic_DNA"/>
</dbReference>
<dbReference type="RefSeq" id="XP_002148168.1">
    <property type="nucleotide sequence ID" value="XM_002148132.1"/>
</dbReference>
<dbReference type="SMR" id="B6QGS2"/>
<dbReference type="STRING" id="441960.B6QGS2"/>
<dbReference type="VEuPathDB" id="FungiDB:PMAA_086400"/>
<dbReference type="HOGENOM" id="CLU_062507_0_0_1"/>
<dbReference type="OrthoDB" id="3469at28568"/>
<dbReference type="PhylomeDB" id="B6QGS2"/>
<dbReference type="Proteomes" id="UP000001294">
    <property type="component" value="Unassembled WGS sequence"/>
</dbReference>
<dbReference type="GO" id="GO:0022627">
    <property type="term" value="C:cytosolic small ribosomal subunit"/>
    <property type="evidence" value="ECO:0007669"/>
    <property type="project" value="UniProtKB-UniRule"/>
</dbReference>
<dbReference type="GO" id="GO:0003735">
    <property type="term" value="F:structural constituent of ribosome"/>
    <property type="evidence" value="ECO:0007669"/>
    <property type="project" value="UniProtKB-UniRule"/>
</dbReference>
<dbReference type="GO" id="GO:0006412">
    <property type="term" value="P:translation"/>
    <property type="evidence" value="ECO:0007669"/>
    <property type="project" value="UniProtKB-UniRule"/>
</dbReference>
<dbReference type="HAMAP" id="MF_03122">
    <property type="entry name" value="Ribosomal_eS1_euk"/>
    <property type="match status" value="1"/>
</dbReference>
<dbReference type="InterPro" id="IPR001593">
    <property type="entry name" value="Ribosomal_eS1"/>
</dbReference>
<dbReference type="InterPro" id="IPR018281">
    <property type="entry name" value="Ribosomal_eS1_CS"/>
</dbReference>
<dbReference type="InterPro" id="IPR027500">
    <property type="entry name" value="Ribosomal_eS1_euk"/>
</dbReference>
<dbReference type="PANTHER" id="PTHR11830">
    <property type="entry name" value="40S RIBOSOMAL PROTEIN S3A"/>
    <property type="match status" value="1"/>
</dbReference>
<dbReference type="Pfam" id="PF01015">
    <property type="entry name" value="Ribosomal_S3Ae"/>
    <property type="match status" value="1"/>
</dbReference>
<dbReference type="SMART" id="SM01397">
    <property type="entry name" value="Ribosomal_S3Ae"/>
    <property type="match status" value="1"/>
</dbReference>
<dbReference type="PROSITE" id="PS01191">
    <property type="entry name" value="RIBOSOMAL_S3AE"/>
    <property type="match status" value="1"/>
</dbReference>
<name>RS3A_TALMQ</name>
<accession>B6QGS2</accession>
<keyword id="KW-0007">Acetylation</keyword>
<keyword id="KW-0963">Cytoplasm</keyword>
<keyword id="KW-1185">Reference proteome</keyword>
<keyword id="KW-0687">Ribonucleoprotein</keyword>
<keyword id="KW-0689">Ribosomal protein</keyword>
<gene>
    <name type="primary">rps1</name>
    <name type="ORF">PMAA_086400</name>
</gene>
<sequence>MAVGKNKRLSKGKKGLKKRTVDPFSRKDEYSVKAPSTFQIRDVGKTLVNRTTGLKNANDSLKGRIFEVSLADLQNDEDHAFRKVKLRVDEVQGKNCLTNFHGLDFTSDKLRSLVRKWQSLIEANVTVKTTDDYLLRLFAIAFTKRRPNQIKKTTYAGSSQIRAIRKKMTEIIQREAASCTLSQLTTKLIPEVIGREIEKSTQGIYPLQNVHIRKVKLLKSPKFDLGALLNLHGESTTDDQGHKVEREFKETVLESV</sequence>
<proteinExistence type="inferred from homology"/>
<protein>
    <recommendedName>
        <fullName evidence="1">Small ribosomal subunit protein eS1</fullName>
    </recommendedName>
    <alternativeName>
        <fullName evidence="3">40S ribosomal protein S1</fullName>
    </alternativeName>
</protein>
<organism>
    <name type="scientific">Talaromyces marneffei (strain ATCC 18224 / CBS 334.59 / QM 7333)</name>
    <name type="common">Penicillium marneffei</name>
    <dbReference type="NCBI Taxonomy" id="441960"/>
    <lineage>
        <taxon>Eukaryota</taxon>
        <taxon>Fungi</taxon>
        <taxon>Dikarya</taxon>
        <taxon>Ascomycota</taxon>
        <taxon>Pezizomycotina</taxon>
        <taxon>Eurotiomycetes</taxon>
        <taxon>Eurotiomycetidae</taxon>
        <taxon>Eurotiales</taxon>
        <taxon>Trichocomaceae</taxon>
        <taxon>Talaromyces</taxon>
        <taxon>Talaromyces sect. Talaromyces</taxon>
    </lineage>
</organism>
<reference key="1">
    <citation type="journal article" date="2015" name="Genome Announc.">
        <title>Genome sequence of the AIDS-associated pathogen Penicillium marneffei (ATCC18224) and its near taxonomic relative Talaromyces stipitatus (ATCC10500).</title>
        <authorList>
            <person name="Nierman W.C."/>
            <person name="Fedorova-Abrams N.D."/>
            <person name="Andrianopoulos A."/>
        </authorList>
    </citation>
    <scope>NUCLEOTIDE SEQUENCE [LARGE SCALE GENOMIC DNA]</scope>
    <source>
        <strain>ATCC 18224 / CBS 334.59 / QM 7333</strain>
    </source>
</reference>
<evidence type="ECO:0000255" key="1">
    <source>
        <dbReference type="HAMAP-Rule" id="MF_03122"/>
    </source>
</evidence>
<evidence type="ECO:0000256" key="2">
    <source>
        <dbReference type="SAM" id="MobiDB-lite"/>
    </source>
</evidence>
<evidence type="ECO:0000305" key="3"/>
<comment type="subunit">
    <text evidence="1">Component of the small ribosomal subunit. Mature ribosomes consist of a small (40S) and a large (60S) subunit. The 40S subunit contains about 33 different proteins and 1 molecule of RNA (18S). The 60S subunit contains about 49 different proteins and 3 molecules of RNA (25S, 5.8S and 5S).</text>
</comment>
<comment type="subcellular location">
    <subcellularLocation>
        <location evidence="1">Cytoplasm</location>
    </subcellularLocation>
</comment>
<comment type="similarity">
    <text evidence="1">Belongs to the eukaryotic ribosomal protein eS1 family.</text>
</comment>